<proteinExistence type="inferred from homology"/>
<comment type="function">
    <text evidence="1">Catalyzes the oxidation of 5,10-methylenetetrahydrofolate to 5,10-methenyltetrahydrofolate and then the hydrolysis of 5,10-methenyltetrahydrofolate to 10-formyltetrahydrofolate.</text>
</comment>
<comment type="catalytic activity">
    <reaction evidence="1">
        <text>(6R)-5,10-methylene-5,6,7,8-tetrahydrofolate + NADP(+) = (6R)-5,10-methenyltetrahydrofolate + NADPH</text>
        <dbReference type="Rhea" id="RHEA:22812"/>
        <dbReference type="ChEBI" id="CHEBI:15636"/>
        <dbReference type="ChEBI" id="CHEBI:57455"/>
        <dbReference type="ChEBI" id="CHEBI:57783"/>
        <dbReference type="ChEBI" id="CHEBI:58349"/>
        <dbReference type="EC" id="1.5.1.5"/>
    </reaction>
</comment>
<comment type="catalytic activity">
    <reaction evidence="1">
        <text>(6R)-5,10-methenyltetrahydrofolate + H2O = (6R)-10-formyltetrahydrofolate + H(+)</text>
        <dbReference type="Rhea" id="RHEA:23700"/>
        <dbReference type="ChEBI" id="CHEBI:15377"/>
        <dbReference type="ChEBI" id="CHEBI:15378"/>
        <dbReference type="ChEBI" id="CHEBI:57455"/>
        <dbReference type="ChEBI" id="CHEBI:195366"/>
        <dbReference type="EC" id="3.5.4.9"/>
    </reaction>
</comment>
<comment type="pathway">
    <text evidence="1">One-carbon metabolism; tetrahydrofolate interconversion.</text>
</comment>
<comment type="subunit">
    <text evidence="1">Homodimer.</text>
</comment>
<comment type="similarity">
    <text evidence="1">Belongs to the tetrahydrofolate dehydrogenase/cyclohydrolase family.</text>
</comment>
<gene>
    <name evidence="1" type="primary">folD</name>
    <name type="ordered locus">Dde_0296</name>
</gene>
<evidence type="ECO:0000255" key="1">
    <source>
        <dbReference type="HAMAP-Rule" id="MF_01576"/>
    </source>
</evidence>
<sequence length="286" mass="30071">MILLDGKATAAAVREELKKDVDALKDRAGRAPGLAVILVGDDPASQVYVRNKERACADAGIRSEAFRISAQTTQQELEERIAALNAREDIDGILLQLPLPAGLDSQRCLELIDPAKDVDGFHPVNMGKLTLGLPGFRPCTPAGVMTLLERYNLSPAGKKAVVLGRSNIVGKPLALMLGASGPFANATVTVCHSRTPDLAQQCREADFLFVAIGRANFVTADMVKPGAVVVDVGINRTENGLAGDVDFGPVSKVASAITPVPGGIGPMTIAQLLVNTVASWKKRCGV</sequence>
<keyword id="KW-0028">Amino-acid biosynthesis</keyword>
<keyword id="KW-0368">Histidine biosynthesis</keyword>
<keyword id="KW-0378">Hydrolase</keyword>
<keyword id="KW-0486">Methionine biosynthesis</keyword>
<keyword id="KW-0511">Multifunctional enzyme</keyword>
<keyword id="KW-0521">NADP</keyword>
<keyword id="KW-0554">One-carbon metabolism</keyword>
<keyword id="KW-0560">Oxidoreductase</keyword>
<keyword id="KW-0658">Purine biosynthesis</keyword>
<keyword id="KW-1185">Reference proteome</keyword>
<protein>
    <recommendedName>
        <fullName evidence="1">Bifunctional protein FolD</fullName>
    </recommendedName>
    <domain>
        <recommendedName>
            <fullName evidence="1">Methylenetetrahydrofolate dehydrogenase</fullName>
            <ecNumber evidence="1">1.5.1.5</ecNumber>
        </recommendedName>
    </domain>
    <domain>
        <recommendedName>
            <fullName evidence="1">Methenyltetrahydrofolate cyclohydrolase</fullName>
            <ecNumber evidence="1">3.5.4.9</ecNumber>
        </recommendedName>
    </domain>
</protein>
<feature type="chain" id="PRO_0000268338" description="Bifunctional protein FolD">
    <location>
        <begin position="1"/>
        <end position="286"/>
    </location>
</feature>
<feature type="binding site" evidence="1">
    <location>
        <begin position="164"/>
        <end position="166"/>
    </location>
    <ligand>
        <name>NADP(+)</name>
        <dbReference type="ChEBI" id="CHEBI:58349"/>
    </ligand>
</feature>
<feature type="binding site" evidence="1">
    <location>
        <position position="193"/>
    </location>
    <ligand>
        <name>NADP(+)</name>
        <dbReference type="ChEBI" id="CHEBI:58349"/>
    </ligand>
</feature>
<feature type="binding site" evidence="1">
    <location>
        <position position="234"/>
    </location>
    <ligand>
        <name>NADP(+)</name>
        <dbReference type="ChEBI" id="CHEBI:58349"/>
    </ligand>
</feature>
<organism>
    <name type="scientific">Oleidesulfovibrio alaskensis (strain ATCC BAA-1058 / DSM 17464 / G20)</name>
    <name type="common">Desulfovibrio alaskensis</name>
    <dbReference type="NCBI Taxonomy" id="207559"/>
    <lineage>
        <taxon>Bacteria</taxon>
        <taxon>Pseudomonadati</taxon>
        <taxon>Thermodesulfobacteriota</taxon>
        <taxon>Desulfovibrionia</taxon>
        <taxon>Desulfovibrionales</taxon>
        <taxon>Desulfovibrionaceae</taxon>
        <taxon>Oleidesulfovibrio</taxon>
    </lineage>
</organism>
<reference key="1">
    <citation type="journal article" date="2011" name="J. Bacteriol.">
        <title>Complete genome sequence and updated annotation of Desulfovibrio alaskensis G20.</title>
        <authorList>
            <person name="Hauser L.J."/>
            <person name="Land M.L."/>
            <person name="Brown S.D."/>
            <person name="Larimer F."/>
            <person name="Keller K.L."/>
            <person name="Rapp-Giles B.J."/>
            <person name="Price M.N."/>
            <person name="Lin M."/>
            <person name="Bruce D.C."/>
            <person name="Detter J.C."/>
            <person name="Tapia R."/>
            <person name="Han C.S."/>
            <person name="Goodwin L.A."/>
            <person name="Cheng J.F."/>
            <person name="Pitluck S."/>
            <person name="Copeland A."/>
            <person name="Lucas S."/>
            <person name="Nolan M."/>
            <person name="Lapidus A.L."/>
            <person name="Palumbo A.V."/>
            <person name="Wall J.D."/>
        </authorList>
    </citation>
    <scope>NUCLEOTIDE SEQUENCE [LARGE SCALE GENOMIC DNA]</scope>
    <source>
        <strain>ATCC BAA-1058 / DSM 17464 / G20</strain>
    </source>
</reference>
<name>FOLD_OLEA2</name>
<dbReference type="EC" id="1.5.1.5" evidence="1"/>
<dbReference type="EC" id="3.5.4.9" evidence="1"/>
<dbReference type="EMBL" id="CP000112">
    <property type="protein sequence ID" value="ABB37097.1"/>
    <property type="molecule type" value="Genomic_DNA"/>
</dbReference>
<dbReference type="RefSeq" id="WP_011366443.1">
    <property type="nucleotide sequence ID" value="NC_007519.1"/>
</dbReference>
<dbReference type="SMR" id="Q316P9"/>
<dbReference type="STRING" id="207559.Dde_0296"/>
<dbReference type="KEGG" id="dde:Dde_0296"/>
<dbReference type="eggNOG" id="COG0190">
    <property type="taxonomic scope" value="Bacteria"/>
</dbReference>
<dbReference type="HOGENOM" id="CLU_034045_2_1_7"/>
<dbReference type="UniPathway" id="UPA00193"/>
<dbReference type="Proteomes" id="UP000002710">
    <property type="component" value="Chromosome"/>
</dbReference>
<dbReference type="GO" id="GO:0005829">
    <property type="term" value="C:cytosol"/>
    <property type="evidence" value="ECO:0007669"/>
    <property type="project" value="TreeGrafter"/>
</dbReference>
<dbReference type="GO" id="GO:0004477">
    <property type="term" value="F:methenyltetrahydrofolate cyclohydrolase activity"/>
    <property type="evidence" value="ECO:0007669"/>
    <property type="project" value="UniProtKB-UniRule"/>
</dbReference>
<dbReference type="GO" id="GO:0004488">
    <property type="term" value="F:methylenetetrahydrofolate dehydrogenase (NADP+) activity"/>
    <property type="evidence" value="ECO:0007669"/>
    <property type="project" value="UniProtKB-UniRule"/>
</dbReference>
<dbReference type="GO" id="GO:0000105">
    <property type="term" value="P:L-histidine biosynthetic process"/>
    <property type="evidence" value="ECO:0007669"/>
    <property type="project" value="UniProtKB-KW"/>
</dbReference>
<dbReference type="GO" id="GO:0009086">
    <property type="term" value="P:methionine biosynthetic process"/>
    <property type="evidence" value="ECO:0007669"/>
    <property type="project" value="UniProtKB-KW"/>
</dbReference>
<dbReference type="GO" id="GO:0006164">
    <property type="term" value="P:purine nucleotide biosynthetic process"/>
    <property type="evidence" value="ECO:0007669"/>
    <property type="project" value="UniProtKB-KW"/>
</dbReference>
<dbReference type="GO" id="GO:0035999">
    <property type="term" value="P:tetrahydrofolate interconversion"/>
    <property type="evidence" value="ECO:0007669"/>
    <property type="project" value="UniProtKB-UniRule"/>
</dbReference>
<dbReference type="CDD" id="cd01080">
    <property type="entry name" value="NAD_bind_m-THF_DH_Cyclohyd"/>
    <property type="match status" value="1"/>
</dbReference>
<dbReference type="FunFam" id="3.40.50.720:FF:000189">
    <property type="entry name" value="Bifunctional protein FolD"/>
    <property type="match status" value="1"/>
</dbReference>
<dbReference type="FunFam" id="3.40.50.10860:FF:000005">
    <property type="entry name" value="C-1-tetrahydrofolate synthase, cytoplasmic, putative"/>
    <property type="match status" value="1"/>
</dbReference>
<dbReference type="Gene3D" id="3.40.50.10860">
    <property type="entry name" value="Leucine Dehydrogenase, chain A, domain 1"/>
    <property type="match status" value="1"/>
</dbReference>
<dbReference type="Gene3D" id="3.40.50.720">
    <property type="entry name" value="NAD(P)-binding Rossmann-like Domain"/>
    <property type="match status" value="1"/>
</dbReference>
<dbReference type="HAMAP" id="MF_01576">
    <property type="entry name" value="THF_DHG_CYH"/>
    <property type="match status" value="1"/>
</dbReference>
<dbReference type="InterPro" id="IPR046346">
    <property type="entry name" value="Aminoacid_DH-like_N_sf"/>
</dbReference>
<dbReference type="InterPro" id="IPR036291">
    <property type="entry name" value="NAD(P)-bd_dom_sf"/>
</dbReference>
<dbReference type="InterPro" id="IPR000672">
    <property type="entry name" value="THF_DH/CycHdrlase"/>
</dbReference>
<dbReference type="InterPro" id="IPR020630">
    <property type="entry name" value="THF_DH/CycHdrlase_cat_dom"/>
</dbReference>
<dbReference type="InterPro" id="IPR020867">
    <property type="entry name" value="THF_DH/CycHdrlase_CS"/>
</dbReference>
<dbReference type="InterPro" id="IPR020631">
    <property type="entry name" value="THF_DH/CycHdrlase_NAD-bd_dom"/>
</dbReference>
<dbReference type="NCBIfam" id="NF008058">
    <property type="entry name" value="PRK10792.1"/>
    <property type="match status" value="1"/>
</dbReference>
<dbReference type="NCBIfam" id="NF010781">
    <property type="entry name" value="PRK14184.1"/>
    <property type="match status" value="1"/>
</dbReference>
<dbReference type="NCBIfam" id="NF010783">
    <property type="entry name" value="PRK14186.1"/>
    <property type="match status" value="1"/>
</dbReference>
<dbReference type="PANTHER" id="PTHR48099:SF5">
    <property type="entry name" value="C-1-TETRAHYDROFOLATE SYNTHASE, CYTOPLASMIC"/>
    <property type="match status" value="1"/>
</dbReference>
<dbReference type="PANTHER" id="PTHR48099">
    <property type="entry name" value="C-1-TETRAHYDROFOLATE SYNTHASE, CYTOPLASMIC-RELATED"/>
    <property type="match status" value="1"/>
</dbReference>
<dbReference type="Pfam" id="PF00763">
    <property type="entry name" value="THF_DHG_CYH"/>
    <property type="match status" value="1"/>
</dbReference>
<dbReference type="Pfam" id="PF02882">
    <property type="entry name" value="THF_DHG_CYH_C"/>
    <property type="match status" value="1"/>
</dbReference>
<dbReference type="PRINTS" id="PR00085">
    <property type="entry name" value="THFDHDRGNASE"/>
</dbReference>
<dbReference type="SUPFAM" id="SSF53223">
    <property type="entry name" value="Aminoacid dehydrogenase-like, N-terminal domain"/>
    <property type="match status" value="1"/>
</dbReference>
<dbReference type="SUPFAM" id="SSF51735">
    <property type="entry name" value="NAD(P)-binding Rossmann-fold domains"/>
    <property type="match status" value="1"/>
</dbReference>
<dbReference type="PROSITE" id="PS00767">
    <property type="entry name" value="THF_DHG_CYH_2"/>
    <property type="match status" value="1"/>
</dbReference>
<accession>Q316P9</accession>